<proteinExistence type="evidence at transcript level"/>
<protein>
    <recommendedName>
        <fullName>ADP-ribosylation factor-like protein 8A</fullName>
    </recommendedName>
</protein>
<gene>
    <name type="primary">ARL8A</name>
    <name type="ORF">RCJMB04_9k9</name>
</gene>
<accession>Q5ZKQ8</accession>
<organism>
    <name type="scientific">Gallus gallus</name>
    <name type="common">Chicken</name>
    <dbReference type="NCBI Taxonomy" id="9031"/>
    <lineage>
        <taxon>Eukaryota</taxon>
        <taxon>Metazoa</taxon>
        <taxon>Chordata</taxon>
        <taxon>Craniata</taxon>
        <taxon>Vertebrata</taxon>
        <taxon>Euteleostomi</taxon>
        <taxon>Archelosauria</taxon>
        <taxon>Archosauria</taxon>
        <taxon>Dinosauria</taxon>
        <taxon>Saurischia</taxon>
        <taxon>Theropoda</taxon>
        <taxon>Coelurosauria</taxon>
        <taxon>Aves</taxon>
        <taxon>Neognathae</taxon>
        <taxon>Galloanserae</taxon>
        <taxon>Galliformes</taxon>
        <taxon>Phasianidae</taxon>
        <taxon>Phasianinae</taxon>
        <taxon>Gallus</taxon>
    </lineage>
</organism>
<sequence length="186" mass="21444">MLALFNKLLDWFRALFWKEEMELTLVGLQYSGKTTFVNVIASGQFNEDMIPTVGFNMRKITKGNVTIKLWDIGGQPRFRSMWERYCRGVSAIVYMVDAADQEKIEASKNELHNLLDKPQLQGIPVLVLGNKRDLPGALDEKELIEKMNLSAIQDREICCYSISCKEKDNIDITLQWLIQHSKSRRS</sequence>
<dbReference type="EMBL" id="AJ720026">
    <property type="protein sequence ID" value="CAG31685.1"/>
    <property type="molecule type" value="mRNA"/>
</dbReference>
<dbReference type="RefSeq" id="NP_001012886.1">
    <property type="nucleotide sequence ID" value="NM_001012868.3"/>
</dbReference>
<dbReference type="SMR" id="Q5ZKQ8"/>
<dbReference type="FunCoup" id="Q5ZKQ8">
    <property type="interactions" value="2120"/>
</dbReference>
<dbReference type="STRING" id="9031.ENSGALP00000040104"/>
<dbReference type="PaxDb" id="9031-ENSGALP00000013517"/>
<dbReference type="Ensembl" id="ENSGALT00010059761.1">
    <property type="protein sequence ID" value="ENSGALP00010036521.1"/>
    <property type="gene ID" value="ENSGALG00010024501.1"/>
</dbReference>
<dbReference type="GeneID" id="421175"/>
<dbReference type="KEGG" id="gga:421175"/>
<dbReference type="CTD" id="127829"/>
<dbReference type="VEuPathDB" id="HostDB:geneid_421175"/>
<dbReference type="eggNOG" id="KOG0075">
    <property type="taxonomic scope" value="Eukaryota"/>
</dbReference>
<dbReference type="GeneTree" id="ENSGT00940000159657"/>
<dbReference type="InParanoid" id="Q5ZKQ8"/>
<dbReference type="OMA" id="RFRSEWG"/>
<dbReference type="OrthoDB" id="2011769at2759"/>
<dbReference type="PhylomeDB" id="Q5ZKQ8"/>
<dbReference type="Reactome" id="R-GGA-6798695">
    <property type="pathway name" value="Neutrophil degranulation"/>
</dbReference>
<dbReference type="PRO" id="PR:Q5ZKQ8"/>
<dbReference type="Proteomes" id="UP000000539">
    <property type="component" value="Chromosome 26"/>
</dbReference>
<dbReference type="Bgee" id="ENSGALG00000000606">
    <property type="expression patterns" value="Expressed in brain and 13 other cell types or tissues"/>
</dbReference>
<dbReference type="GO" id="GO:1904115">
    <property type="term" value="C:axon cytoplasm"/>
    <property type="evidence" value="ECO:0007669"/>
    <property type="project" value="GOC"/>
</dbReference>
<dbReference type="GO" id="GO:0031902">
    <property type="term" value="C:late endosome membrane"/>
    <property type="evidence" value="ECO:0007669"/>
    <property type="project" value="UniProtKB-SubCell"/>
</dbReference>
<dbReference type="GO" id="GO:0005765">
    <property type="term" value="C:lysosomal membrane"/>
    <property type="evidence" value="ECO:0000318"/>
    <property type="project" value="GO_Central"/>
</dbReference>
<dbReference type="GO" id="GO:0005819">
    <property type="term" value="C:spindle"/>
    <property type="evidence" value="ECO:0007669"/>
    <property type="project" value="UniProtKB-SubCell"/>
</dbReference>
<dbReference type="GO" id="GO:0045202">
    <property type="term" value="C:synapse"/>
    <property type="evidence" value="ECO:0007669"/>
    <property type="project" value="UniProtKB-SubCell"/>
</dbReference>
<dbReference type="GO" id="GO:0005525">
    <property type="term" value="F:GTP binding"/>
    <property type="evidence" value="ECO:0007669"/>
    <property type="project" value="UniProtKB-KW"/>
</dbReference>
<dbReference type="GO" id="GO:0003924">
    <property type="term" value="F:GTPase activity"/>
    <property type="evidence" value="ECO:0007669"/>
    <property type="project" value="InterPro"/>
</dbReference>
<dbReference type="GO" id="GO:0008089">
    <property type="term" value="P:anterograde axonal transport"/>
    <property type="evidence" value="ECO:0000318"/>
    <property type="project" value="GO_Central"/>
</dbReference>
<dbReference type="GO" id="GO:0051301">
    <property type="term" value="P:cell division"/>
    <property type="evidence" value="ECO:0007669"/>
    <property type="project" value="UniProtKB-KW"/>
</dbReference>
<dbReference type="GO" id="GO:0007059">
    <property type="term" value="P:chromosome segregation"/>
    <property type="evidence" value="ECO:0007669"/>
    <property type="project" value="UniProtKB-KW"/>
</dbReference>
<dbReference type="GO" id="GO:0015031">
    <property type="term" value="P:protein transport"/>
    <property type="evidence" value="ECO:0007669"/>
    <property type="project" value="UniProtKB-KW"/>
</dbReference>
<dbReference type="CDD" id="cd04159">
    <property type="entry name" value="Arl10_like"/>
    <property type="match status" value="1"/>
</dbReference>
<dbReference type="FunFam" id="3.40.50.300:FF:000247">
    <property type="entry name" value="ADP-ribosylation factor-like GTPase 8A"/>
    <property type="match status" value="1"/>
</dbReference>
<dbReference type="Gene3D" id="3.40.50.300">
    <property type="entry name" value="P-loop containing nucleotide triphosphate hydrolases"/>
    <property type="match status" value="1"/>
</dbReference>
<dbReference type="InterPro" id="IPR044154">
    <property type="entry name" value="Arl8a/8b"/>
</dbReference>
<dbReference type="InterPro" id="IPR027417">
    <property type="entry name" value="P-loop_NTPase"/>
</dbReference>
<dbReference type="InterPro" id="IPR005225">
    <property type="entry name" value="Small_GTP-bd"/>
</dbReference>
<dbReference type="InterPro" id="IPR006689">
    <property type="entry name" value="Small_GTPase_ARF/SAR"/>
</dbReference>
<dbReference type="NCBIfam" id="TIGR00231">
    <property type="entry name" value="small_GTP"/>
    <property type="match status" value="1"/>
</dbReference>
<dbReference type="PANTHER" id="PTHR45732">
    <property type="entry name" value="ADP-RIBOSYLATION FACTOR-LIKE PROTEIN 8"/>
    <property type="match status" value="1"/>
</dbReference>
<dbReference type="PANTHER" id="PTHR45732:SF4">
    <property type="entry name" value="ADP-RIBOSYLATION FACTOR-LIKE PROTEIN 8A"/>
    <property type="match status" value="1"/>
</dbReference>
<dbReference type="Pfam" id="PF00025">
    <property type="entry name" value="Arf"/>
    <property type="match status" value="1"/>
</dbReference>
<dbReference type="PRINTS" id="PR00328">
    <property type="entry name" value="SAR1GTPBP"/>
</dbReference>
<dbReference type="SMART" id="SM00177">
    <property type="entry name" value="ARF"/>
    <property type="match status" value="1"/>
</dbReference>
<dbReference type="SMART" id="SM00175">
    <property type="entry name" value="RAB"/>
    <property type="match status" value="1"/>
</dbReference>
<dbReference type="SMART" id="SM00178">
    <property type="entry name" value="SAR"/>
    <property type="match status" value="1"/>
</dbReference>
<dbReference type="SUPFAM" id="SSF52540">
    <property type="entry name" value="P-loop containing nucleoside triphosphate hydrolases"/>
    <property type="match status" value="1"/>
</dbReference>
<dbReference type="PROSITE" id="PS51417">
    <property type="entry name" value="ARF"/>
    <property type="match status" value="1"/>
</dbReference>
<keyword id="KW-0131">Cell cycle</keyword>
<keyword id="KW-0132">Cell division</keyword>
<keyword id="KW-0966">Cell projection</keyword>
<keyword id="KW-0159">Chromosome partition</keyword>
<keyword id="KW-0963">Cytoplasm</keyword>
<keyword id="KW-0206">Cytoskeleton</keyword>
<keyword id="KW-0967">Endosome</keyword>
<keyword id="KW-0342">GTP-binding</keyword>
<keyword id="KW-0458">Lysosome</keyword>
<keyword id="KW-0472">Membrane</keyword>
<keyword id="KW-0498">Mitosis</keyword>
<keyword id="KW-0547">Nucleotide-binding</keyword>
<keyword id="KW-0653">Protein transport</keyword>
<keyword id="KW-1185">Reference proteome</keyword>
<keyword id="KW-0770">Synapse</keyword>
<keyword id="KW-0813">Transport</keyword>
<name>ARL8A_CHICK</name>
<reference key="1">
    <citation type="journal article" date="2005" name="Genome Biol.">
        <title>Full-length cDNAs from chicken bursal lymphocytes to facilitate gene function analysis.</title>
        <authorList>
            <person name="Caldwell R.B."/>
            <person name="Kierzek A.M."/>
            <person name="Arakawa H."/>
            <person name="Bezzubov Y."/>
            <person name="Zaim J."/>
            <person name="Fiedler P."/>
            <person name="Kutter S."/>
            <person name="Blagodatski A."/>
            <person name="Kostovska D."/>
            <person name="Koter M."/>
            <person name="Plachy J."/>
            <person name="Carninci P."/>
            <person name="Hayashizaki Y."/>
            <person name="Buerstedde J.-M."/>
        </authorList>
    </citation>
    <scope>NUCLEOTIDE SEQUENCE [LARGE SCALE MRNA]</scope>
    <source>
        <strain>CB</strain>
        <tissue>Bursa of Fabricius</tissue>
    </source>
</reference>
<feature type="chain" id="PRO_0000232918" description="ADP-ribosylation factor-like protein 8A">
    <location>
        <begin position="1"/>
        <end position="186"/>
    </location>
</feature>
<feature type="intramembrane region" description="Note=Mediates targeting to membranes" evidence="1">
    <location>
        <begin position="1"/>
        <end position="19"/>
    </location>
</feature>
<feature type="binding site" evidence="1">
    <location>
        <begin position="29"/>
        <end position="35"/>
    </location>
    <ligand>
        <name>GTP</name>
        <dbReference type="ChEBI" id="CHEBI:37565"/>
    </ligand>
</feature>
<feature type="binding site" evidence="1">
    <location>
        <begin position="71"/>
        <end position="75"/>
    </location>
    <ligand>
        <name>GTP</name>
        <dbReference type="ChEBI" id="CHEBI:37565"/>
    </ligand>
</feature>
<feature type="binding site" evidence="1">
    <location>
        <begin position="130"/>
        <end position="133"/>
    </location>
    <ligand>
        <name>GTP</name>
        <dbReference type="ChEBI" id="CHEBI:37565"/>
    </ligand>
</feature>
<evidence type="ECO:0000250" key="1"/>
<evidence type="ECO:0000250" key="2">
    <source>
        <dbReference type="UniProtKB" id="Q9CQW2"/>
    </source>
</evidence>
<evidence type="ECO:0000250" key="3">
    <source>
        <dbReference type="UniProtKB" id="Q9NVJ2"/>
    </source>
</evidence>
<evidence type="ECO:0000305" key="4"/>
<comment type="function">
    <text evidence="2 3">Plays a role in lysosome motility. In neurons, mediates the anterograde axonal long-range transport of presynaptic lysosome-related vesicles required for presynaptic biogenesis and synaptic function (By similarity). May play a role in chromosome segregation (By similarity).</text>
</comment>
<comment type="subcellular location">
    <subcellularLocation>
        <location evidence="3">Late endosome membrane</location>
    </subcellularLocation>
    <subcellularLocation>
        <location evidence="2">Lysosome membrane</location>
    </subcellularLocation>
    <subcellularLocation>
        <location evidence="3">Cytoplasm</location>
        <location evidence="3">Cytoskeleton</location>
        <location evidence="3">Spindle</location>
    </subcellularLocation>
    <subcellularLocation>
        <location evidence="2">Cell projection</location>
        <location evidence="2">Axon</location>
    </subcellularLocation>
    <subcellularLocation>
        <location evidence="2">Synapse</location>
    </subcellularLocation>
    <text evidence="3">Localizes with microtubules at the spindle mid-zone during mitosis.</text>
</comment>
<comment type="similarity">
    <text evidence="4">Belongs to the small GTPase superfamily. Arf family.</text>
</comment>